<organism>
    <name type="scientific">Carboxydothermus hydrogenoformans (strain ATCC BAA-161 / DSM 6008 / Z-2901)</name>
    <dbReference type="NCBI Taxonomy" id="246194"/>
    <lineage>
        <taxon>Bacteria</taxon>
        <taxon>Bacillati</taxon>
        <taxon>Bacillota</taxon>
        <taxon>Clostridia</taxon>
        <taxon>Thermoanaerobacterales</taxon>
        <taxon>Thermoanaerobacteraceae</taxon>
        <taxon>Carboxydothermus</taxon>
    </lineage>
</organism>
<accession>Q3AF13</accession>
<proteinExistence type="inferred from homology"/>
<gene>
    <name evidence="1" type="primary">lepA</name>
    <name type="ordered locus">CHY_0410</name>
</gene>
<protein>
    <recommendedName>
        <fullName evidence="1">Elongation factor 4</fullName>
        <shortName evidence="1">EF-4</shortName>
        <ecNumber evidence="1">3.6.5.n1</ecNumber>
    </recommendedName>
    <alternativeName>
        <fullName evidence="1">Ribosomal back-translocase LepA</fullName>
    </alternativeName>
</protein>
<name>LEPA_CARHZ</name>
<sequence length="603" mass="67978">MPKRQELIRNFCIIAHIDHGKSTLADRLIEFTGALSERELKEQVLDQMELERERGITIKAQAVKLTYKAKDGNTYYLNLIDTPGHVDFTYEVSRSLAACEGALLVVDASQGIEAQTLANVYLAMEHDLELIPVVNKIDLPNAEPERVLKEIEDVIGLDTSEAILASAKTGQGIEEVLEAIVKRIPPPRGDEEKPLKALIFDSHYDPYKGVIAYIRLVDGFIKPGMKIKMMSNDKEFEVTEVGIFKPYLTPVEGLWAGEVGFIAAGIKNVRDCRVGDTITSAENPAKEPLPGYKQVKPMVFCGLYPVESNQYEDLRDALEKLKLNDASLTFEPETSVALGFGFRCGFLGLLHMEIIQERLEREYGLNLITTAPNVVYRVVQTNGEVLEIDNPAKLPPAGKIDHIEEPYVKATIMVPKEFVGNIMDLCIERRGVFINMEYLSENRVMLTYDLPLAEIIYDFFDQLKSRSKGYASLDYEFIGYRPGDLVKMDILIAGEPVDALSIIVHEDKAYYRGRQLVEKLRELIPRHLFEIPIQAAIGSRVIARETVKALRKDVLAKCYGGDVTRKKKLLEKQKEGKKRMKQIGRVEIPQEAFMAVLKIDNNK</sequence>
<comment type="function">
    <text evidence="1">Required for accurate and efficient protein synthesis under certain stress conditions. May act as a fidelity factor of the translation reaction, by catalyzing a one-codon backward translocation of tRNAs on improperly translocated ribosomes. Back-translocation proceeds from a post-translocation (POST) complex to a pre-translocation (PRE) complex, thus giving elongation factor G a second chance to translocate the tRNAs correctly. Binds to ribosomes in a GTP-dependent manner.</text>
</comment>
<comment type="catalytic activity">
    <reaction evidence="1">
        <text>GTP + H2O = GDP + phosphate + H(+)</text>
        <dbReference type="Rhea" id="RHEA:19669"/>
        <dbReference type="ChEBI" id="CHEBI:15377"/>
        <dbReference type="ChEBI" id="CHEBI:15378"/>
        <dbReference type="ChEBI" id="CHEBI:37565"/>
        <dbReference type="ChEBI" id="CHEBI:43474"/>
        <dbReference type="ChEBI" id="CHEBI:58189"/>
        <dbReference type="EC" id="3.6.5.n1"/>
    </reaction>
</comment>
<comment type="subcellular location">
    <subcellularLocation>
        <location evidence="1">Cell membrane</location>
        <topology evidence="1">Peripheral membrane protein</topology>
        <orientation evidence="1">Cytoplasmic side</orientation>
    </subcellularLocation>
</comment>
<comment type="similarity">
    <text evidence="1">Belongs to the TRAFAC class translation factor GTPase superfamily. Classic translation factor GTPase family. LepA subfamily.</text>
</comment>
<reference key="1">
    <citation type="journal article" date="2005" name="PLoS Genet.">
        <title>Life in hot carbon monoxide: the complete genome sequence of Carboxydothermus hydrogenoformans Z-2901.</title>
        <authorList>
            <person name="Wu M."/>
            <person name="Ren Q."/>
            <person name="Durkin A.S."/>
            <person name="Daugherty S.C."/>
            <person name="Brinkac L.M."/>
            <person name="Dodson R.J."/>
            <person name="Madupu R."/>
            <person name="Sullivan S.A."/>
            <person name="Kolonay J.F."/>
            <person name="Nelson W.C."/>
            <person name="Tallon L.J."/>
            <person name="Jones K.M."/>
            <person name="Ulrich L.E."/>
            <person name="Gonzalez J.M."/>
            <person name="Zhulin I.B."/>
            <person name="Robb F.T."/>
            <person name="Eisen J.A."/>
        </authorList>
    </citation>
    <scope>NUCLEOTIDE SEQUENCE [LARGE SCALE GENOMIC DNA]</scope>
    <source>
        <strain>ATCC BAA-161 / DSM 6008 / Z-2901</strain>
    </source>
</reference>
<feature type="chain" id="PRO_0000224749" description="Elongation factor 4">
    <location>
        <begin position="1"/>
        <end position="603"/>
    </location>
</feature>
<feature type="domain" description="tr-type G">
    <location>
        <begin position="6"/>
        <end position="188"/>
    </location>
</feature>
<feature type="binding site" evidence="1">
    <location>
        <begin position="18"/>
        <end position="23"/>
    </location>
    <ligand>
        <name>GTP</name>
        <dbReference type="ChEBI" id="CHEBI:37565"/>
    </ligand>
</feature>
<feature type="binding site" evidence="1">
    <location>
        <begin position="135"/>
        <end position="138"/>
    </location>
    <ligand>
        <name>GTP</name>
        <dbReference type="ChEBI" id="CHEBI:37565"/>
    </ligand>
</feature>
<dbReference type="EC" id="3.6.5.n1" evidence="1"/>
<dbReference type="EMBL" id="CP000141">
    <property type="protein sequence ID" value="ABB15445.1"/>
    <property type="molecule type" value="Genomic_DNA"/>
</dbReference>
<dbReference type="RefSeq" id="WP_011343347.1">
    <property type="nucleotide sequence ID" value="NC_007503.1"/>
</dbReference>
<dbReference type="SMR" id="Q3AF13"/>
<dbReference type="FunCoup" id="Q3AF13">
    <property type="interactions" value="399"/>
</dbReference>
<dbReference type="STRING" id="246194.CHY_0410"/>
<dbReference type="KEGG" id="chy:CHY_0410"/>
<dbReference type="eggNOG" id="COG0481">
    <property type="taxonomic scope" value="Bacteria"/>
</dbReference>
<dbReference type="HOGENOM" id="CLU_009995_3_3_9"/>
<dbReference type="InParanoid" id="Q3AF13"/>
<dbReference type="OrthoDB" id="9801591at2"/>
<dbReference type="Proteomes" id="UP000002706">
    <property type="component" value="Chromosome"/>
</dbReference>
<dbReference type="GO" id="GO:0005886">
    <property type="term" value="C:plasma membrane"/>
    <property type="evidence" value="ECO:0007669"/>
    <property type="project" value="UniProtKB-SubCell"/>
</dbReference>
<dbReference type="GO" id="GO:0005525">
    <property type="term" value="F:GTP binding"/>
    <property type="evidence" value="ECO:0007669"/>
    <property type="project" value="UniProtKB-UniRule"/>
</dbReference>
<dbReference type="GO" id="GO:0003924">
    <property type="term" value="F:GTPase activity"/>
    <property type="evidence" value="ECO:0007669"/>
    <property type="project" value="UniProtKB-UniRule"/>
</dbReference>
<dbReference type="GO" id="GO:0043022">
    <property type="term" value="F:ribosome binding"/>
    <property type="evidence" value="ECO:0007669"/>
    <property type="project" value="UniProtKB-UniRule"/>
</dbReference>
<dbReference type="GO" id="GO:0003746">
    <property type="term" value="F:translation elongation factor activity"/>
    <property type="evidence" value="ECO:0007669"/>
    <property type="project" value="UniProtKB-UniRule"/>
</dbReference>
<dbReference type="GO" id="GO:0045727">
    <property type="term" value="P:positive regulation of translation"/>
    <property type="evidence" value="ECO:0007669"/>
    <property type="project" value="UniProtKB-UniRule"/>
</dbReference>
<dbReference type="CDD" id="cd03699">
    <property type="entry name" value="EF4_II"/>
    <property type="match status" value="1"/>
</dbReference>
<dbReference type="CDD" id="cd16260">
    <property type="entry name" value="EF4_III"/>
    <property type="match status" value="1"/>
</dbReference>
<dbReference type="CDD" id="cd01890">
    <property type="entry name" value="LepA"/>
    <property type="match status" value="1"/>
</dbReference>
<dbReference type="CDD" id="cd03709">
    <property type="entry name" value="lepA_C"/>
    <property type="match status" value="1"/>
</dbReference>
<dbReference type="FunFam" id="3.40.50.300:FF:000078">
    <property type="entry name" value="Elongation factor 4"/>
    <property type="match status" value="1"/>
</dbReference>
<dbReference type="FunFam" id="2.40.30.10:FF:000015">
    <property type="entry name" value="Translation factor GUF1, mitochondrial"/>
    <property type="match status" value="1"/>
</dbReference>
<dbReference type="FunFam" id="3.30.70.240:FF:000007">
    <property type="entry name" value="Translation factor GUF1, mitochondrial"/>
    <property type="match status" value="1"/>
</dbReference>
<dbReference type="FunFam" id="3.30.70.2570:FF:000001">
    <property type="entry name" value="Translation factor GUF1, mitochondrial"/>
    <property type="match status" value="1"/>
</dbReference>
<dbReference type="FunFam" id="3.30.70.870:FF:000004">
    <property type="entry name" value="Translation factor GUF1, mitochondrial"/>
    <property type="match status" value="1"/>
</dbReference>
<dbReference type="Gene3D" id="3.30.70.240">
    <property type="match status" value="1"/>
</dbReference>
<dbReference type="Gene3D" id="3.30.70.2570">
    <property type="entry name" value="Elongation factor 4, C-terminal domain"/>
    <property type="match status" value="1"/>
</dbReference>
<dbReference type="Gene3D" id="3.30.70.870">
    <property type="entry name" value="Elongation Factor G (Translational Gtpase), domain 3"/>
    <property type="match status" value="1"/>
</dbReference>
<dbReference type="Gene3D" id="3.40.50.300">
    <property type="entry name" value="P-loop containing nucleotide triphosphate hydrolases"/>
    <property type="match status" value="1"/>
</dbReference>
<dbReference type="Gene3D" id="2.40.30.10">
    <property type="entry name" value="Translation factors"/>
    <property type="match status" value="1"/>
</dbReference>
<dbReference type="HAMAP" id="MF_00071">
    <property type="entry name" value="LepA"/>
    <property type="match status" value="1"/>
</dbReference>
<dbReference type="InterPro" id="IPR006297">
    <property type="entry name" value="EF-4"/>
</dbReference>
<dbReference type="InterPro" id="IPR035647">
    <property type="entry name" value="EFG_III/V"/>
</dbReference>
<dbReference type="InterPro" id="IPR000640">
    <property type="entry name" value="EFG_V-like"/>
</dbReference>
<dbReference type="InterPro" id="IPR004161">
    <property type="entry name" value="EFTu-like_2"/>
</dbReference>
<dbReference type="InterPro" id="IPR031157">
    <property type="entry name" value="G_TR_CS"/>
</dbReference>
<dbReference type="InterPro" id="IPR038363">
    <property type="entry name" value="LepA_C_sf"/>
</dbReference>
<dbReference type="InterPro" id="IPR013842">
    <property type="entry name" value="LepA_CTD"/>
</dbReference>
<dbReference type="InterPro" id="IPR035654">
    <property type="entry name" value="LepA_IV"/>
</dbReference>
<dbReference type="InterPro" id="IPR027417">
    <property type="entry name" value="P-loop_NTPase"/>
</dbReference>
<dbReference type="InterPro" id="IPR005225">
    <property type="entry name" value="Small_GTP-bd"/>
</dbReference>
<dbReference type="InterPro" id="IPR000795">
    <property type="entry name" value="T_Tr_GTP-bd_dom"/>
</dbReference>
<dbReference type="InterPro" id="IPR009000">
    <property type="entry name" value="Transl_B-barrel_sf"/>
</dbReference>
<dbReference type="NCBIfam" id="TIGR01393">
    <property type="entry name" value="lepA"/>
    <property type="match status" value="1"/>
</dbReference>
<dbReference type="NCBIfam" id="TIGR00231">
    <property type="entry name" value="small_GTP"/>
    <property type="match status" value="1"/>
</dbReference>
<dbReference type="PANTHER" id="PTHR43512:SF4">
    <property type="entry name" value="TRANSLATION FACTOR GUF1 HOMOLOG, CHLOROPLASTIC"/>
    <property type="match status" value="1"/>
</dbReference>
<dbReference type="PANTHER" id="PTHR43512">
    <property type="entry name" value="TRANSLATION FACTOR GUF1-RELATED"/>
    <property type="match status" value="1"/>
</dbReference>
<dbReference type="Pfam" id="PF00679">
    <property type="entry name" value="EFG_C"/>
    <property type="match status" value="1"/>
</dbReference>
<dbReference type="Pfam" id="PF00009">
    <property type="entry name" value="GTP_EFTU"/>
    <property type="match status" value="1"/>
</dbReference>
<dbReference type="Pfam" id="PF03144">
    <property type="entry name" value="GTP_EFTU_D2"/>
    <property type="match status" value="1"/>
</dbReference>
<dbReference type="Pfam" id="PF06421">
    <property type="entry name" value="LepA_C"/>
    <property type="match status" value="1"/>
</dbReference>
<dbReference type="PRINTS" id="PR00315">
    <property type="entry name" value="ELONGATNFCT"/>
</dbReference>
<dbReference type="SMART" id="SM00838">
    <property type="entry name" value="EFG_C"/>
    <property type="match status" value="1"/>
</dbReference>
<dbReference type="SUPFAM" id="SSF54980">
    <property type="entry name" value="EF-G C-terminal domain-like"/>
    <property type="match status" value="2"/>
</dbReference>
<dbReference type="SUPFAM" id="SSF52540">
    <property type="entry name" value="P-loop containing nucleoside triphosphate hydrolases"/>
    <property type="match status" value="1"/>
</dbReference>
<dbReference type="SUPFAM" id="SSF50447">
    <property type="entry name" value="Translation proteins"/>
    <property type="match status" value="1"/>
</dbReference>
<dbReference type="PROSITE" id="PS00301">
    <property type="entry name" value="G_TR_1"/>
    <property type="match status" value="1"/>
</dbReference>
<dbReference type="PROSITE" id="PS51722">
    <property type="entry name" value="G_TR_2"/>
    <property type="match status" value="1"/>
</dbReference>
<keyword id="KW-1003">Cell membrane</keyword>
<keyword id="KW-0342">GTP-binding</keyword>
<keyword id="KW-0378">Hydrolase</keyword>
<keyword id="KW-0472">Membrane</keyword>
<keyword id="KW-0547">Nucleotide-binding</keyword>
<keyword id="KW-0648">Protein biosynthesis</keyword>
<keyword id="KW-1185">Reference proteome</keyword>
<evidence type="ECO:0000255" key="1">
    <source>
        <dbReference type="HAMAP-Rule" id="MF_00071"/>
    </source>
</evidence>